<sequence length="232" mass="25429">MTRLEIVDSKLRQAKKTEEYFNAIRTNIQFSGKENKILAITSVREGEGKSTTSTSLALSLAQAGFKTLLIDADTRNSVMSGTFKATGTIKGLTNYLSGNADLGDIICETNVPRLMVVPSGKVPPNPTALLQNAYFNKMIEAIKNIFDYIIIDTPPIGLVVDAAIIANACDGFILVTQAGRIKRNYVEKAKEQMEQSGSKFLGIILNKVNESVATYGDYGDYGNYGKRDRKRK</sequence>
<gene>
    <name type="primary">cpsD</name>
    <name type="ordered locus">gbs1245</name>
</gene>
<dbReference type="EC" id="2.7.10.2"/>
<dbReference type="EMBL" id="AF163833">
    <property type="protein sequence ID" value="AAB00363.1"/>
    <property type="molecule type" value="Genomic_DNA"/>
</dbReference>
<dbReference type="EMBL" id="AL766849">
    <property type="protein sequence ID" value="CAD46904.1"/>
    <property type="molecule type" value="Genomic_DNA"/>
</dbReference>
<dbReference type="PIR" id="S34976">
    <property type="entry name" value="S34976"/>
</dbReference>
<dbReference type="PIR" id="T44642">
    <property type="entry name" value="T44642"/>
</dbReference>
<dbReference type="RefSeq" id="WP_000197412.1">
    <property type="nucleotide sequence ID" value="NC_004368.1"/>
</dbReference>
<dbReference type="SMR" id="Q04663"/>
<dbReference type="KEGG" id="san:cpsD"/>
<dbReference type="eggNOG" id="COG0489">
    <property type="taxonomic scope" value="Bacteria"/>
</dbReference>
<dbReference type="HOGENOM" id="CLU_052027_2_0_9"/>
<dbReference type="UniPathway" id="UPA00934"/>
<dbReference type="Proteomes" id="UP000000823">
    <property type="component" value="Chromosome"/>
</dbReference>
<dbReference type="GO" id="GO:0005886">
    <property type="term" value="C:plasma membrane"/>
    <property type="evidence" value="ECO:0007669"/>
    <property type="project" value="TreeGrafter"/>
</dbReference>
<dbReference type="GO" id="GO:0005524">
    <property type="term" value="F:ATP binding"/>
    <property type="evidence" value="ECO:0007669"/>
    <property type="project" value="UniProtKB-KW"/>
</dbReference>
<dbReference type="GO" id="GO:0004715">
    <property type="term" value="F:non-membrane spanning protein tyrosine kinase activity"/>
    <property type="evidence" value="ECO:0007669"/>
    <property type="project" value="UniProtKB-EC"/>
</dbReference>
<dbReference type="GO" id="GO:0045227">
    <property type="term" value="P:capsule polysaccharide biosynthetic process"/>
    <property type="evidence" value="ECO:0007669"/>
    <property type="project" value="UniProtKB-UniPathway"/>
</dbReference>
<dbReference type="CDD" id="cd05387">
    <property type="entry name" value="BY-kinase"/>
    <property type="match status" value="1"/>
</dbReference>
<dbReference type="Gene3D" id="3.40.50.300">
    <property type="entry name" value="P-loop containing nucleotide triphosphate hydrolases"/>
    <property type="match status" value="1"/>
</dbReference>
<dbReference type="InterPro" id="IPR025669">
    <property type="entry name" value="AAA_dom"/>
</dbReference>
<dbReference type="InterPro" id="IPR050445">
    <property type="entry name" value="Bact_polysacc_biosynth/exp"/>
</dbReference>
<dbReference type="InterPro" id="IPR027417">
    <property type="entry name" value="P-loop_NTPase"/>
</dbReference>
<dbReference type="InterPro" id="IPR005702">
    <property type="entry name" value="Wzc-like_C"/>
</dbReference>
<dbReference type="NCBIfam" id="TIGR01007">
    <property type="entry name" value="eps_fam"/>
    <property type="match status" value="1"/>
</dbReference>
<dbReference type="PANTHER" id="PTHR32309:SF13">
    <property type="entry name" value="FERRIC ENTEROBACTIN TRANSPORT PROTEIN FEPE"/>
    <property type="match status" value="1"/>
</dbReference>
<dbReference type="PANTHER" id="PTHR32309">
    <property type="entry name" value="TYROSINE-PROTEIN KINASE"/>
    <property type="match status" value="1"/>
</dbReference>
<dbReference type="Pfam" id="PF13614">
    <property type="entry name" value="AAA_31"/>
    <property type="match status" value="1"/>
</dbReference>
<dbReference type="SUPFAM" id="SSF52540">
    <property type="entry name" value="P-loop containing nucleoside triphosphate hydrolases"/>
    <property type="match status" value="1"/>
</dbReference>
<protein>
    <recommendedName>
        <fullName>Tyrosine-protein kinase CpsD</fullName>
        <ecNumber>2.7.10.2</ecNumber>
    </recommendedName>
</protein>
<accession>Q04663</accession>
<feature type="chain" id="PRO_0000217235" description="Tyrosine-protein kinase CpsD">
    <location>
        <begin position="1"/>
        <end position="232"/>
    </location>
</feature>
<feature type="sequence conflict" description="In Ref. 1; AAB00363." evidence="2" ref="1">
    <original>T</original>
    <variation>A</variation>
    <location>
        <position position="41"/>
    </location>
</feature>
<feature type="sequence conflict" description="In Ref. 1; AAB00363." evidence="2" ref="1">
    <location>
        <begin position="218"/>
        <end position="220"/>
    </location>
</feature>
<proteinExistence type="inferred from homology"/>
<evidence type="ECO:0000250" key="1"/>
<evidence type="ECO:0000305" key="2"/>
<evidence type="ECO:0000305" key="3">
    <source>
    </source>
</evidence>
<keyword id="KW-0067">ATP-binding</keyword>
<keyword id="KW-0972">Capsule biogenesis/degradation</keyword>
<keyword id="KW-0270">Exopolysaccharide synthesis</keyword>
<keyword id="KW-0418">Kinase</keyword>
<keyword id="KW-0547">Nucleotide-binding</keyword>
<keyword id="KW-0597">Phosphoprotein</keyword>
<keyword id="KW-0808">Transferase</keyword>
<keyword id="KW-0829">Tyrosine-protein kinase</keyword>
<organism>
    <name type="scientific">Streptococcus agalactiae serotype III (strain NEM316)</name>
    <dbReference type="NCBI Taxonomy" id="211110"/>
    <lineage>
        <taxon>Bacteria</taxon>
        <taxon>Bacillati</taxon>
        <taxon>Bacillota</taxon>
        <taxon>Bacilli</taxon>
        <taxon>Lactobacillales</taxon>
        <taxon>Streptococcaceae</taxon>
        <taxon>Streptococcus</taxon>
    </lineage>
</organism>
<reference key="1">
    <citation type="journal article" date="1993" name="Mol. Microbiol.">
        <title>Identification of cpsD, a gene essential for type III capsule expression in group B streptococci.</title>
        <authorList>
            <person name="Rubens C.E."/>
            <person name="Heggen L.M."/>
            <person name="Haft R.F."/>
            <person name="Wessels M.R."/>
        </authorList>
    </citation>
    <scope>NUCLEOTIDE SEQUENCE [GENOMIC DNA]</scope>
    <source>
        <strain>COH1 / Serotype III</strain>
    </source>
</reference>
<reference key="2">
    <citation type="submission" date="1996-05" db="EMBL/GenBank/DDBJ databases">
        <authorList>
            <person name="Yim H."/>
        </authorList>
    </citation>
    <scope>SEQUENCE REVISION</scope>
</reference>
<reference key="3">
    <citation type="journal article" date="2002" name="Mol. Microbiol.">
        <title>Genome sequence of Streptococcus agalactiae, a pathogen causing invasive neonatal disease.</title>
        <authorList>
            <person name="Glaser P."/>
            <person name="Rusniok C."/>
            <person name="Buchrieser C."/>
            <person name="Chevalier F."/>
            <person name="Frangeul L."/>
            <person name="Msadek T."/>
            <person name="Zouine M."/>
            <person name="Couve E."/>
            <person name="Lalioui L."/>
            <person name="Poyart C."/>
            <person name="Trieu-Cuot P."/>
            <person name="Kunst F."/>
        </authorList>
    </citation>
    <scope>NUCLEOTIDE SEQUENCE [LARGE SCALE GENOMIC DNA]</scope>
    <source>
        <strain>NEM316</strain>
    </source>
</reference>
<name>CPSD_STRA3</name>
<comment type="function">
    <text evidence="1">Involved in the regulation of capsular polysaccharide biosynthesis. Autophosphorylation of CpsD attenuates its activity and reduces the level of encapsulation. May be part of a complex that directs the coordinated polymerization and export to the cell surface of the capsular polysaccharide (By similarity).</text>
</comment>
<comment type="catalytic activity">
    <reaction>
        <text>L-tyrosyl-[protein] + ATP = O-phospho-L-tyrosyl-[protein] + ADP + H(+)</text>
        <dbReference type="Rhea" id="RHEA:10596"/>
        <dbReference type="Rhea" id="RHEA-COMP:10136"/>
        <dbReference type="Rhea" id="RHEA-COMP:20101"/>
        <dbReference type="ChEBI" id="CHEBI:15378"/>
        <dbReference type="ChEBI" id="CHEBI:30616"/>
        <dbReference type="ChEBI" id="CHEBI:46858"/>
        <dbReference type="ChEBI" id="CHEBI:61978"/>
        <dbReference type="ChEBI" id="CHEBI:456216"/>
        <dbReference type="EC" id="2.7.10.2"/>
    </reaction>
</comment>
<comment type="activity regulation">
    <text evidence="1">Dephosphorylated and activated by CpsB.</text>
</comment>
<comment type="pathway">
    <text>Capsule biogenesis; capsule polysaccharide biosynthesis.</text>
</comment>
<comment type="PTM">
    <text evidence="1">Autophosphorylated.</text>
</comment>
<comment type="similarity">
    <text evidence="2">Belongs to the CpsD/CapB family.</text>
</comment>
<comment type="caution">
    <text evidence="3">Was originally called CpsC.</text>
</comment>